<dbReference type="EC" id="2.7.7.39" evidence="1"/>
<dbReference type="EMBL" id="AJ313428">
    <property type="protein sequence ID" value="CAC86112.1"/>
    <property type="molecule type" value="Genomic_DNA"/>
</dbReference>
<dbReference type="EMBL" id="AM260209">
    <property type="protein sequence ID" value="CAJ97399.1"/>
    <property type="molecule type" value="Genomic_DNA"/>
</dbReference>
<dbReference type="EMBL" id="CP002183">
    <property type="protein sequence ID" value="ADM39545.1"/>
    <property type="molecule type" value="Genomic_DNA"/>
</dbReference>
<dbReference type="SMR" id="Q8RKI6"/>
<dbReference type="KEGG" id="bss:BSUW23_17550"/>
<dbReference type="HOGENOM" id="CLU_034585_2_2_9"/>
<dbReference type="UniPathway" id="UPA00790"/>
<dbReference type="Proteomes" id="UP000002233">
    <property type="component" value="Chromosome"/>
</dbReference>
<dbReference type="GO" id="GO:0005737">
    <property type="term" value="C:cytoplasm"/>
    <property type="evidence" value="ECO:0007669"/>
    <property type="project" value="UniProtKB-SubCell"/>
</dbReference>
<dbReference type="GO" id="GO:0047348">
    <property type="term" value="F:glycerol-3-phosphate cytidylyltransferase activity"/>
    <property type="evidence" value="ECO:0007669"/>
    <property type="project" value="UniProtKB-EC"/>
</dbReference>
<dbReference type="GO" id="GO:0046872">
    <property type="term" value="F:metal ion binding"/>
    <property type="evidence" value="ECO:0007669"/>
    <property type="project" value="InterPro"/>
</dbReference>
<dbReference type="GO" id="GO:0071555">
    <property type="term" value="P:cell wall organization"/>
    <property type="evidence" value="ECO:0007669"/>
    <property type="project" value="UniProtKB-KW"/>
</dbReference>
<dbReference type="GO" id="GO:0019350">
    <property type="term" value="P:teichoic acid biosynthetic process"/>
    <property type="evidence" value="ECO:0007669"/>
    <property type="project" value="UniProtKB-KW"/>
</dbReference>
<dbReference type="CDD" id="cd02171">
    <property type="entry name" value="G3P_Cytidylyltransferase"/>
    <property type="match status" value="1"/>
</dbReference>
<dbReference type="Gene3D" id="3.40.50.620">
    <property type="entry name" value="HUPs"/>
    <property type="match status" value="1"/>
</dbReference>
<dbReference type="InterPro" id="IPR050385">
    <property type="entry name" value="Archaeal_FAD_synthase"/>
</dbReference>
<dbReference type="InterPro" id="IPR004821">
    <property type="entry name" value="Cyt_trans-like"/>
</dbReference>
<dbReference type="InterPro" id="IPR006409">
    <property type="entry name" value="G3P_cytidylTrfase"/>
</dbReference>
<dbReference type="InterPro" id="IPR014729">
    <property type="entry name" value="Rossmann-like_a/b/a_fold"/>
</dbReference>
<dbReference type="NCBIfam" id="TIGR00125">
    <property type="entry name" value="cyt_tran_rel"/>
    <property type="match status" value="1"/>
</dbReference>
<dbReference type="NCBIfam" id="TIGR01518">
    <property type="entry name" value="g3p_cytidyltrns"/>
    <property type="match status" value="1"/>
</dbReference>
<dbReference type="PANTHER" id="PTHR43793">
    <property type="entry name" value="FAD SYNTHASE"/>
    <property type="match status" value="1"/>
</dbReference>
<dbReference type="PANTHER" id="PTHR43793:SF1">
    <property type="entry name" value="FAD SYNTHASE"/>
    <property type="match status" value="1"/>
</dbReference>
<dbReference type="Pfam" id="PF01467">
    <property type="entry name" value="CTP_transf_like"/>
    <property type="match status" value="1"/>
</dbReference>
<dbReference type="SUPFAM" id="SSF52374">
    <property type="entry name" value="Nucleotidylyl transferase"/>
    <property type="match status" value="1"/>
</dbReference>
<gene>
    <name type="primary">tarD</name>
    <name type="ordered locus">BSUW23_17550</name>
</gene>
<feature type="chain" id="PRO_0000208467" description="Glycerol-3-phosphate cytidylyltransferase">
    <location>
        <begin position="1"/>
        <end position="129"/>
    </location>
</feature>
<feature type="binding site" evidence="1">
    <location>
        <begin position="9"/>
        <end position="10"/>
    </location>
    <ligand>
        <name>CTP</name>
        <dbReference type="ChEBI" id="CHEBI:37563"/>
    </ligand>
</feature>
<feature type="binding site" evidence="1">
    <location>
        <begin position="14"/>
        <end position="17"/>
    </location>
    <ligand>
        <name>CTP</name>
        <dbReference type="ChEBI" id="CHEBI:37563"/>
    </ligand>
</feature>
<feature type="binding site" evidence="1">
    <location>
        <position position="44"/>
    </location>
    <ligand>
        <name>substrate</name>
    </ligand>
</feature>
<feature type="binding site" evidence="1">
    <location>
        <position position="46"/>
    </location>
    <ligand>
        <name>CTP</name>
        <dbReference type="ChEBI" id="CHEBI:37563"/>
    </ligand>
</feature>
<feature type="binding site" evidence="1">
    <location>
        <position position="77"/>
    </location>
    <ligand>
        <name>substrate</name>
    </ligand>
</feature>
<feature type="binding site" evidence="1">
    <location>
        <begin position="113"/>
        <end position="120"/>
    </location>
    <ligand>
        <name>CTP</name>
        <dbReference type="ChEBI" id="CHEBI:37563"/>
    </ligand>
</feature>
<keyword id="KW-0961">Cell wall biogenesis/degradation</keyword>
<keyword id="KW-0963">Cytoplasm</keyword>
<keyword id="KW-0548">Nucleotidyltransferase</keyword>
<keyword id="KW-0777">Teichoic acid biosynthesis</keyword>
<keyword id="KW-0808">Transferase</keyword>
<proteinExistence type="inferred from homology"/>
<sequence length="129" mass="15257">MKKVITYGTFDLFHYGHMKLLERAKNLGDYLIVGLSTDEFNLQKQKKSHHSYEHRKFILETIDLVNEVIPEKNWEQKISDIQKHDIDTFVIGDDWKGKFDFLKEYCEVIYLPRTDGISTTQIKKDMASL</sequence>
<comment type="function">
    <text evidence="2">Catalyzes the transfer of the cytidylyl group of CTP to sn-glycerol 3-phosphate so the activated glycerol 3-phosphate can be used for teichoic acid synthesis, via incorporation into both the linkage unit by TarB and TarF.</text>
</comment>
<comment type="catalytic activity">
    <reaction evidence="1">
        <text>sn-glycerol 3-phosphate + CTP + H(+) = CDP-glycerol + diphosphate</text>
        <dbReference type="Rhea" id="RHEA:13361"/>
        <dbReference type="ChEBI" id="CHEBI:15378"/>
        <dbReference type="ChEBI" id="CHEBI:33019"/>
        <dbReference type="ChEBI" id="CHEBI:37563"/>
        <dbReference type="ChEBI" id="CHEBI:57597"/>
        <dbReference type="ChEBI" id="CHEBI:58311"/>
        <dbReference type="EC" id="2.7.7.39"/>
    </reaction>
</comment>
<comment type="pathway">
    <text>Cell wall biogenesis; poly(ribitol phosphate) teichoic acid biosynthesis.</text>
</comment>
<comment type="subunit">
    <text evidence="1">Homodimer.</text>
</comment>
<comment type="subcellular location">
    <subcellularLocation>
        <location evidence="1">Cytoplasm</location>
    </subcellularLocation>
</comment>
<comment type="similarity">
    <text evidence="3">Belongs to the cytidylyltransferase family.</text>
</comment>
<reference key="1">
    <citation type="journal article" date="2002" name="Microbiology">
        <title>Comparison of ribitol and glycerol teichoic acid genes in Bacillus subtilis W23 and 168: identical function, similar divergent organization, but different regulation.</title>
        <authorList>
            <person name="Lazarevic V."/>
            <person name="Abellan F.-X."/>
            <person name="Beggah Moeller S."/>
            <person name="Karamata D."/>
            <person name="Maueel C."/>
        </authorList>
    </citation>
    <scope>NUCLEOTIDE SEQUENCE [GENOMIC DNA]</scope>
    <scope>FUNCTION</scope>
    <source>
        <strain>ATCC 23059 / NRRL B-14472 / W23</strain>
    </source>
</reference>
<reference key="2">
    <citation type="submission" date="2006-04" db="EMBL/GenBank/DDBJ databases">
        <title>Minor teichoic acid of Bacillus subtilis W23.</title>
        <authorList>
            <person name="Soldo B."/>
            <person name="Freymond P.P."/>
            <person name="Karamata D."/>
            <person name="Lazarevic V."/>
        </authorList>
    </citation>
    <scope>NUCLEOTIDE SEQUENCE [GENOMIC DNA]</scope>
    <source>
        <strain>ATCC 23059 / NRRL B-14472 / W23</strain>
    </source>
</reference>
<reference key="3">
    <citation type="journal article" date="2011" name="Microbiology">
        <title>The genome sequence of Bacillus subtilis subsp. spizizenii W23: insights into speciation within the B. subtilis complex and into the history of B. subtilis genetics.</title>
        <authorList>
            <person name="Zeigler D.R."/>
        </authorList>
    </citation>
    <scope>NUCLEOTIDE SEQUENCE [LARGE SCALE GENOMIC DNA]</scope>
    <source>
        <strain>ATCC 23059 / NRRL B-14472 / W23</strain>
    </source>
</reference>
<evidence type="ECO:0000250" key="1">
    <source>
        <dbReference type="UniProtKB" id="P27623"/>
    </source>
</evidence>
<evidence type="ECO:0000269" key="2">
    <source>
    </source>
</evidence>
<evidence type="ECO:0000305" key="3"/>
<protein>
    <recommendedName>
        <fullName>Glycerol-3-phosphate cytidylyltransferase</fullName>
        <shortName>GCT</shortName>
        <shortName>GCTase</shortName>
        <shortName>Gro-PCT</shortName>
        <ecNumber evidence="1">2.7.7.39</ecNumber>
    </recommendedName>
    <alternativeName>
        <fullName>CDP-glycerol pyrophosphorylase</fullName>
    </alternativeName>
</protein>
<accession>Q8RKI6</accession>
<accession>B7ZDL0</accession>
<accession>E0U4X4</accession>
<name>TARD_BACSH</name>
<organism>
    <name type="scientific">Bacillus spizizenii (strain ATCC 23059 / NRRL B-14472 / W23)</name>
    <name type="common">Bacillus subtilis subsp. spizizenii</name>
    <dbReference type="NCBI Taxonomy" id="655816"/>
    <lineage>
        <taxon>Bacteria</taxon>
        <taxon>Bacillati</taxon>
        <taxon>Bacillota</taxon>
        <taxon>Bacilli</taxon>
        <taxon>Bacillales</taxon>
        <taxon>Bacillaceae</taxon>
        <taxon>Bacillus</taxon>
    </lineage>
</organism>